<sequence>MTCFQTIAVIGAGAWGTALAAVAARAGRDVTLYARDADHASHIASARENPRLPGIPLASRIAVTADLARAARADTVLIVVPAQHLRGAVMHVAPLLAPGTPLVACAKGIEHGTHKFMTEVIAEAAPCATPAILSGPSFAHDVARGLPTAVTLAAPDEALAAALVQALGSPTFRPYHSTDVRGVEIGGAAKNVLAIAAGIVAGRQLGASALAALTTRGFAELVRLGRAHGARSETLTGLSGLGDLILTCAGPQSRNFAAGLALGRGEPLPAGKLAEGQYTAPVLVELAAARGVEMPVAQAVAAILAGAVTIDAAIEALMLRPFKAEE</sequence>
<name>GPDA_BRASB</name>
<feature type="chain" id="PRO_1000049484" description="Glycerol-3-phosphate dehydrogenase [NAD(P)+]">
    <location>
        <begin position="1"/>
        <end position="326"/>
    </location>
</feature>
<feature type="active site" description="Proton acceptor" evidence="1">
    <location>
        <position position="190"/>
    </location>
</feature>
<feature type="binding site" evidence="1">
    <location>
        <position position="15"/>
    </location>
    <ligand>
        <name>NADPH</name>
        <dbReference type="ChEBI" id="CHEBI:57783"/>
    </ligand>
</feature>
<feature type="binding site" evidence="1">
    <location>
        <position position="35"/>
    </location>
    <ligand>
        <name>NADPH</name>
        <dbReference type="ChEBI" id="CHEBI:57783"/>
    </ligand>
</feature>
<feature type="binding site" evidence="1">
    <location>
        <position position="107"/>
    </location>
    <ligand>
        <name>NADPH</name>
        <dbReference type="ChEBI" id="CHEBI:57783"/>
    </ligand>
</feature>
<feature type="binding site" evidence="1">
    <location>
        <position position="107"/>
    </location>
    <ligand>
        <name>sn-glycerol 3-phosphate</name>
        <dbReference type="ChEBI" id="CHEBI:57597"/>
    </ligand>
</feature>
<feature type="binding site" evidence="1">
    <location>
        <position position="135"/>
    </location>
    <ligand>
        <name>sn-glycerol 3-phosphate</name>
        <dbReference type="ChEBI" id="CHEBI:57597"/>
    </ligand>
</feature>
<feature type="binding site" evidence="1">
    <location>
        <position position="137"/>
    </location>
    <ligand>
        <name>sn-glycerol 3-phosphate</name>
        <dbReference type="ChEBI" id="CHEBI:57597"/>
    </ligand>
</feature>
<feature type="binding site" evidence="1">
    <location>
        <position position="139"/>
    </location>
    <ligand>
        <name>NADPH</name>
        <dbReference type="ChEBI" id="CHEBI:57783"/>
    </ligand>
</feature>
<feature type="binding site" evidence="1">
    <location>
        <position position="190"/>
    </location>
    <ligand>
        <name>sn-glycerol 3-phosphate</name>
        <dbReference type="ChEBI" id="CHEBI:57597"/>
    </ligand>
</feature>
<feature type="binding site" evidence="1">
    <location>
        <position position="243"/>
    </location>
    <ligand>
        <name>sn-glycerol 3-phosphate</name>
        <dbReference type="ChEBI" id="CHEBI:57597"/>
    </ligand>
</feature>
<feature type="binding site" evidence="1">
    <location>
        <position position="253"/>
    </location>
    <ligand>
        <name>sn-glycerol 3-phosphate</name>
        <dbReference type="ChEBI" id="CHEBI:57597"/>
    </ligand>
</feature>
<feature type="binding site" evidence="1">
    <location>
        <position position="254"/>
    </location>
    <ligand>
        <name>NADPH</name>
        <dbReference type="ChEBI" id="CHEBI:57783"/>
    </ligand>
</feature>
<feature type="binding site" evidence="1">
    <location>
        <position position="254"/>
    </location>
    <ligand>
        <name>sn-glycerol 3-phosphate</name>
        <dbReference type="ChEBI" id="CHEBI:57597"/>
    </ligand>
</feature>
<feature type="binding site" evidence="1">
    <location>
        <position position="255"/>
    </location>
    <ligand>
        <name>sn-glycerol 3-phosphate</name>
        <dbReference type="ChEBI" id="CHEBI:57597"/>
    </ligand>
</feature>
<feature type="binding site" evidence="1">
    <location>
        <position position="273"/>
    </location>
    <ligand>
        <name>NADPH</name>
        <dbReference type="ChEBI" id="CHEBI:57783"/>
    </ligand>
</feature>
<feature type="binding site" evidence="1">
    <location>
        <position position="275"/>
    </location>
    <ligand>
        <name>NADPH</name>
        <dbReference type="ChEBI" id="CHEBI:57783"/>
    </ligand>
</feature>
<reference key="1">
    <citation type="journal article" date="2007" name="Science">
        <title>Legumes symbioses: absence of nod genes in photosynthetic bradyrhizobia.</title>
        <authorList>
            <person name="Giraud E."/>
            <person name="Moulin L."/>
            <person name="Vallenet D."/>
            <person name="Barbe V."/>
            <person name="Cytryn E."/>
            <person name="Avarre J.-C."/>
            <person name="Jaubert M."/>
            <person name="Simon D."/>
            <person name="Cartieaux F."/>
            <person name="Prin Y."/>
            <person name="Bena G."/>
            <person name="Hannibal L."/>
            <person name="Fardoux J."/>
            <person name="Kojadinovic M."/>
            <person name="Vuillet L."/>
            <person name="Lajus A."/>
            <person name="Cruveiller S."/>
            <person name="Rouy Z."/>
            <person name="Mangenot S."/>
            <person name="Segurens B."/>
            <person name="Dossat C."/>
            <person name="Franck W.L."/>
            <person name="Chang W.-S."/>
            <person name="Saunders E."/>
            <person name="Bruce D."/>
            <person name="Richardson P."/>
            <person name="Normand P."/>
            <person name="Dreyfus B."/>
            <person name="Pignol D."/>
            <person name="Stacey G."/>
            <person name="Emerich D."/>
            <person name="Vermeglio A."/>
            <person name="Medigue C."/>
            <person name="Sadowsky M."/>
        </authorList>
    </citation>
    <scope>NUCLEOTIDE SEQUENCE [LARGE SCALE GENOMIC DNA]</scope>
    <source>
        <strain>BTAi1 / ATCC BAA-1182</strain>
    </source>
</reference>
<dbReference type="EC" id="1.1.1.94" evidence="1"/>
<dbReference type="EMBL" id="CP000494">
    <property type="protein sequence ID" value="ABQ32583.1"/>
    <property type="molecule type" value="Genomic_DNA"/>
</dbReference>
<dbReference type="RefSeq" id="WP_012040639.1">
    <property type="nucleotide sequence ID" value="NC_009485.1"/>
</dbReference>
<dbReference type="SMR" id="A5E8T9"/>
<dbReference type="STRING" id="288000.BBta_0290"/>
<dbReference type="KEGG" id="bbt:BBta_0290"/>
<dbReference type="eggNOG" id="COG0240">
    <property type="taxonomic scope" value="Bacteria"/>
</dbReference>
<dbReference type="HOGENOM" id="CLU_033449_0_2_5"/>
<dbReference type="OrthoDB" id="9812273at2"/>
<dbReference type="UniPathway" id="UPA00940"/>
<dbReference type="Proteomes" id="UP000000246">
    <property type="component" value="Chromosome"/>
</dbReference>
<dbReference type="GO" id="GO:0005829">
    <property type="term" value="C:cytosol"/>
    <property type="evidence" value="ECO:0007669"/>
    <property type="project" value="TreeGrafter"/>
</dbReference>
<dbReference type="GO" id="GO:0047952">
    <property type="term" value="F:glycerol-3-phosphate dehydrogenase [NAD(P)+] activity"/>
    <property type="evidence" value="ECO:0007669"/>
    <property type="project" value="UniProtKB-UniRule"/>
</dbReference>
<dbReference type="GO" id="GO:0051287">
    <property type="term" value="F:NAD binding"/>
    <property type="evidence" value="ECO:0007669"/>
    <property type="project" value="InterPro"/>
</dbReference>
<dbReference type="GO" id="GO:0005975">
    <property type="term" value="P:carbohydrate metabolic process"/>
    <property type="evidence" value="ECO:0007669"/>
    <property type="project" value="InterPro"/>
</dbReference>
<dbReference type="GO" id="GO:0046167">
    <property type="term" value="P:glycerol-3-phosphate biosynthetic process"/>
    <property type="evidence" value="ECO:0007669"/>
    <property type="project" value="UniProtKB-UniRule"/>
</dbReference>
<dbReference type="GO" id="GO:0046168">
    <property type="term" value="P:glycerol-3-phosphate catabolic process"/>
    <property type="evidence" value="ECO:0007669"/>
    <property type="project" value="InterPro"/>
</dbReference>
<dbReference type="GO" id="GO:0006650">
    <property type="term" value="P:glycerophospholipid metabolic process"/>
    <property type="evidence" value="ECO:0007669"/>
    <property type="project" value="UniProtKB-UniRule"/>
</dbReference>
<dbReference type="GO" id="GO:0008654">
    <property type="term" value="P:phospholipid biosynthetic process"/>
    <property type="evidence" value="ECO:0007669"/>
    <property type="project" value="UniProtKB-KW"/>
</dbReference>
<dbReference type="FunFam" id="3.40.50.720:FF:000019">
    <property type="entry name" value="Glycerol-3-phosphate dehydrogenase [NAD(P)+]"/>
    <property type="match status" value="1"/>
</dbReference>
<dbReference type="Gene3D" id="1.10.1040.10">
    <property type="entry name" value="N-(1-d-carboxylethyl)-l-norvaline Dehydrogenase, domain 2"/>
    <property type="match status" value="1"/>
</dbReference>
<dbReference type="Gene3D" id="3.40.50.720">
    <property type="entry name" value="NAD(P)-binding Rossmann-like Domain"/>
    <property type="match status" value="1"/>
</dbReference>
<dbReference type="HAMAP" id="MF_00394">
    <property type="entry name" value="NAD_Glyc3P_dehydrog"/>
    <property type="match status" value="1"/>
</dbReference>
<dbReference type="InterPro" id="IPR008927">
    <property type="entry name" value="6-PGluconate_DH-like_C_sf"/>
</dbReference>
<dbReference type="InterPro" id="IPR013328">
    <property type="entry name" value="6PGD_dom2"/>
</dbReference>
<dbReference type="InterPro" id="IPR006168">
    <property type="entry name" value="G3P_DH_NAD-dep"/>
</dbReference>
<dbReference type="InterPro" id="IPR006109">
    <property type="entry name" value="G3P_DH_NAD-dep_C"/>
</dbReference>
<dbReference type="InterPro" id="IPR011128">
    <property type="entry name" value="G3P_DH_NAD-dep_N"/>
</dbReference>
<dbReference type="InterPro" id="IPR036291">
    <property type="entry name" value="NAD(P)-bd_dom_sf"/>
</dbReference>
<dbReference type="NCBIfam" id="NF000940">
    <property type="entry name" value="PRK00094.1-2"/>
    <property type="match status" value="1"/>
</dbReference>
<dbReference type="NCBIfam" id="NF000942">
    <property type="entry name" value="PRK00094.1-4"/>
    <property type="match status" value="1"/>
</dbReference>
<dbReference type="PANTHER" id="PTHR11728">
    <property type="entry name" value="GLYCEROL-3-PHOSPHATE DEHYDROGENASE"/>
    <property type="match status" value="1"/>
</dbReference>
<dbReference type="PANTHER" id="PTHR11728:SF1">
    <property type="entry name" value="GLYCEROL-3-PHOSPHATE DEHYDROGENASE [NAD(+)] 2, CHLOROPLASTIC"/>
    <property type="match status" value="1"/>
</dbReference>
<dbReference type="Pfam" id="PF07479">
    <property type="entry name" value="NAD_Gly3P_dh_C"/>
    <property type="match status" value="1"/>
</dbReference>
<dbReference type="Pfam" id="PF01210">
    <property type="entry name" value="NAD_Gly3P_dh_N"/>
    <property type="match status" value="1"/>
</dbReference>
<dbReference type="PIRSF" id="PIRSF000114">
    <property type="entry name" value="Glycerol-3-P_dh"/>
    <property type="match status" value="1"/>
</dbReference>
<dbReference type="PRINTS" id="PR00077">
    <property type="entry name" value="GPDHDRGNASE"/>
</dbReference>
<dbReference type="SUPFAM" id="SSF48179">
    <property type="entry name" value="6-phosphogluconate dehydrogenase C-terminal domain-like"/>
    <property type="match status" value="1"/>
</dbReference>
<dbReference type="SUPFAM" id="SSF51735">
    <property type="entry name" value="NAD(P)-binding Rossmann-fold domains"/>
    <property type="match status" value="1"/>
</dbReference>
<dbReference type="PROSITE" id="PS00957">
    <property type="entry name" value="NAD_G3PDH"/>
    <property type="match status" value="1"/>
</dbReference>
<keyword id="KW-0963">Cytoplasm</keyword>
<keyword id="KW-0444">Lipid biosynthesis</keyword>
<keyword id="KW-0443">Lipid metabolism</keyword>
<keyword id="KW-0520">NAD</keyword>
<keyword id="KW-0521">NADP</keyword>
<keyword id="KW-0547">Nucleotide-binding</keyword>
<keyword id="KW-0560">Oxidoreductase</keyword>
<keyword id="KW-0594">Phospholipid biosynthesis</keyword>
<keyword id="KW-1208">Phospholipid metabolism</keyword>
<keyword id="KW-1185">Reference proteome</keyword>
<comment type="function">
    <text evidence="1">Catalyzes the reduction of the glycolytic intermediate dihydroxyacetone phosphate (DHAP) to sn-glycerol 3-phosphate (G3P), the key precursor for phospholipid synthesis.</text>
</comment>
<comment type="catalytic activity">
    <reaction evidence="1">
        <text>sn-glycerol 3-phosphate + NAD(+) = dihydroxyacetone phosphate + NADH + H(+)</text>
        <dbReference type="Rhea" id="RHEA:11092"/>
        <dbReference type="ChEBI" id="CHEBI:15378"/>
        <dbReference type="ChEBI" id="CHEBI:57540"/>
        <dbReference type="ChEBI" id="CHEBI:57597"/>
        <dbReference type="ChEBI" id="CHEBI:57642"/>
        <dbReference type="ChEBI" id="CHEBI:57945"/>
        <dbReference type="EC" id="1.1.1.94"/>
    </reaction>
    <physiologicalReaction direction="right-to-left" evidence="1">
        <dbReference type="Rhea" id="RHEA:11094"/>
    </physiologicalReaction>
</comment>
<comment type="catalytic activity">
    <reaction evidence="1">
        <text>sn-glycerol 3-phosphate + NADP(+) = dihydroxyacetone phosphate + NADPH + H(+)</text>
        <dbReference type="Rhea" id="RHEA:11096"/>
        <dbReference type="ChEBI" id="CHEBI:15378"/>
        <dbReference type="ChEBI" id="CHEBI:57597"/>
        <dbReference type="ChEBI" id="CHEBI:57642"/>
        <dbReference type="ChEBI" id="CHEBI:57783"/>
        <dbReference type="ChEBI" id="CHEBI:58349"/>
        <dbReference type="EC" id="1.1.1.94"/>
    </reaction>
    <physiologicalReaction direction="right-to-left" evidence="1">
        <dbReference type="Rhea" id="RHEA:11098"/>
    </physiologicalReaction>
</comment>
<comment type="pathway">
    <text evidence="1">Membrane lipid metabolism; glycerophospholipid metabolism.</text>
</comment>
<comment type="subcellular location">
    <subcellularLocation>
        <location evidence="1">Cytoplasm</location>
    </subcellularLocation>
</comment>
<comment type="similarity">
    <text evidence="1">Belongs to the NAD-dependent glycerol-3-phosphate dehydrogenase family.</text>
</comment>
<gene>
    <name evidence="1" type="primary">gpsA</name>
    <name type="ordered locus">BBta_0290</name>
</gene>
<protein>
    <recommendedName>
        <fullName evidence="1">Glycerol-3-phosphate dehydrogenase [NAD(P)+]</fullName>
        <ecNumber evidence="1">1.1.1.94</ecNumber>
    </recommendedName>
    <alternativeName>
        <fullName evidence="1">NAD(P)(+)-dependent glycerol-3-phosphate dehydrogenase</fullName>
    </alternativeName>
    <alternativeName>
        <fullName evidence="1">NAD(P)H-dependent dihydroxyacetone-phosphate reductase</fullName>
    </alternativeName>
</protein>
<organism>
    <name type="scientific">Bradyrhizobium sp. (strain BTAi1 / ATCC BAA-1182)</name>
    <dbReference type="NCBI Taxonomy" id="288000"/>
    <lineage>
        <taxon>Bacteria</taxon>
        <taxon>Pseudomonadati</taxon>
        <taxon>Pseudomonadota</taxon>
        <taxon>Alphaproteobacteria</taxon>
        <taxon>Hyphomicrobiales</taxon>
        <taxon>Nitrobacteraceae</taxon>
        <taxon>Bradyrhizobium</taxon>
    </lineage>
</organism>
<evidence type="ECO:0000255" key="1">
    <source>
        <dbReference type="HAMAP-Rule" id="MF_00394"/>
    </source>
</evidence>
<accession>A5E8T9</accession>
<proteinExistence type="inferred from homology"/>